<organism>
    <name type="scientific">Campylobacter fetus subsp. fetus (strain 82-40)</name>
    <dbReference type="NCBI Taxonomy" id="360106"/>
    <lineage>
        <taxon>Bacteria</taxon>
        <taxon>Pseudomonadati</taxon>
        <taxon>Campylobacterota</taxon>
        <taxon>Epsilonproteobacteria</taxon>
        <taxon>Campylobacterales</taxon>
        <taxon>Campylobacteraceae</taxon>
        <taxon>Campylobacter</taxon>
    </lineage>
</organism>
<reference key="1">
    <citation type="submission" date="2006-11" db="EMBL/GenBank/DDBJ databases">
        <title>Sequence of Campylobacter fetus subsp. fetus 82-40.</title>
        <authorList>
            <person name="Fouts D.E."/>
            <person name="Nelson K.E."/>
        </authorList>
    </citation>
    <scope>NUCLEOTIDE SEQUENCE [LARGE SCALE GENOMIC DNA]</scope>
    <source>
        <strain>82-40</strain>
    </source>
</reference>
<sequence>MDKNDYLKAVDSLNLWAKAYYTDDSPMASDDEYDKLYNAVVQFEKENPDLKLSYSPTNRIGGEILDEFKKISHIEKMWSMEDIFSDSELVAWISRGDKTDCEFFAEPKFDGASLNLLYENGNLISAATRGDGSVGEDVTNNAKVISSVPLQIDYKDKIEIRGEVVITKDDFELINIERSKNSEPPLANPRNAAAGSLRQLDNGIVKQRKLKFYPWGVGENSLKFNKHSQIMDFVRSLGFLHDNFCKVIRGIDELKIAYKELLSVRELKPILMDGMVIRVNDLSKANQLGYTVKFPKFMVAYKFPATEKTARLIDILLQVGRTGVVTPVGLLDGVLIDGAFIKNVTLHNFDEIDRLNLMKNDFVTVIRSGDVIPKITGVFKDRRDGSQSEIIRPKICPKCGNELLDEGVFIKCQNLTCKARVVSSIIYFASKKCMNIDGLGDAIVELLYQKNIIKDIADIYRLDELSFIGLEGFKTKKISNLLSAINNSKTPNLDKFIASLGIEHIGEVAAKKIANNYGDRWLELTLEELLALDGFGEAMALSYLEFMRVNLEKIKELLEFITPKMQNLELKTNIFSGKTVVITGTLSRSRDEFKAELESYGAKVSSSVSKKTDFVLYGNEAGSKLEKANELGVRAIDESEYESLK</sequence>
<accession>A0RPY7</accession>
<protein>
    <recommendedName>
        <fullName evidence="1">DNA ligase</fullName>
        <ecNumber evidence="1">6.5.1.2</ecNumber>
    </recommendedName>
    <alternativeName>
        <fullName evidence="1">Polydeoxyribonucleotide synthase [NAD(+)]</fullName>
    </alternativeName>
</protein>
<proteinExistence type="inferred from homology"/>
<evidence type="ECO:0000255" key="1">
    <source>
        <dbReference type="HAMAP-Rule" id="MF_01588"/>
    </source>
</evidence>
<comment type="function">
    <text evidence="1">DNA ligase that catalyzes the formation of phosphodiester linkages between 5'-phosphoryl and 3'-hydroxyl groups in double-stranded DNA using NAD as a coenzyme and as the energy source for the reaction. It is essential for DNA replication and repair of damaged DNA.</text>
</comment>
<comment type="catalytic activity">
    <reaction evidence="1">
        <text>NAD(+) + (deoxyribonucleotide)n-3'-hydroxyl + 5'-phospho-(deoxyribonucleotide)m = (deoxyribonucleotide)n+m + AMP + beta-nicotinamide D-nucleotide.</text>
        <dbReference type="EC" id="6.5.1.2"/>
    </reaction>
</comment>
<comment type="cofactor">
    <cofactor evidence="1">
        <name>Mg(2+)</name>
        <dbReference type="ChEBI" id="CHEBI:18420"/>
    </cofactor>
    <cofactor evidence="1">
        <name>Mn(2+)</name>
        <dbReference type="ChEBI" id="CHEBI:29035"/>
    </cofactor>
</comment>
<comment type="similarity">
    <text evidence="1">Belongs to the NAD-dependent DNA ligase family. LigA subfamily.</text>
</comment>
<gene>
    <name evidence="1" type="primary">ligA</name>
    <name type="ordered locus">CFF8240_1112</name>
</gene>
<name>DNLJ_CAMFF</name>
<keyword id="KW-0227">DNA damage</keyword>
<keyword id="KW-0234">DNA repair</keyword>
<keyword id="KW-0235">DNA replication</keyword>
<keyword id="KW-0436">Ligase</keyword>
<keyword id="KW-0460">Magnesium</keyword>
<keyword id="KW-0464">Manganese</keyword>
<keyword id="KW-0479">Metal-binding</keyword>
<keyword id="KW-0520">NAD</keyword>
<keyword id="KW-0862">Zinc</keyword>
<dbReference type="EC" id="6.5.1.2" evidence="1"/>
<dbReference type="EMBL" id="CP000487">
    <property type="protein sequence ID" value="ABK82322.1"/>
    <property type="molecule type" value="Genomic_DNA"/>
</dbReference>
<dbReference type="RefSeq" id="WP_011732086.1">
    <property type="nucleotide sequence ID" value="NC_008599.1"/>
</dbReference>
<dbReference type="SMR" id="A0RPY7"/>
<dbReference type="GeneID" id="61064937"/>
<dbReference type="KEGG" id="cff:CFF8240_1112"/>
<dbReference type="PATRIC" id="fig|360106.6.peg.1085"/>
<dbReference type="eggNOG" id="COG0272">
    <property type="taxonomic scope" value="Bacteria"/>
</dbReference>
<dbReference type="HOGENOM" id="CLU_007764_2_1_7"/>
<dbReference type="Proteomes" id="UP000000760">
    <property type="component" value="Chromosome"/>
</dbReference>
<dbReference type="GO" id="GO:0005829">
    <property type="term" value="C:cytosol"/>
    <property type="evidence" value="ECO:0007669"/>
    <property type="project" value="TreeGrafter"/>
</dbReference>
<dbReference type="GO" id="GO:0003911">
    <property type="term" value="F:DNA ligase (NAD+) activity"/>
    <property type="evidence" value="ECO:0007669"/>
    <property type="project" value="UniProtKB-UniRule"/>
</dbReference>
<dbReference type="GO" id="GO:0046872">
    <property type="term" value="F:metal ion binding"/>
    <property type="evidence" value="ECO:0007669"/>
    <property type="project" value="UniProtKB-KW"/>
</dbReference>
<dbReference type="GO" id="GO:0006281">
    <property type="term" value="P:DNA repair"/>
    <property type="evidence" value="ECO:0007669"/>
    <property type="project" value="UniProtKB-KW"/>
</dbReference>
<dbReference type="GO" id="GO:0006260">
    <property type="term" value="P:DNA replication"/>
    <property type="evidence" value="ECO:0007669"/>
    <property type="project" value="UniProtKB-KW"/>
</dbReference>
<dbReference type="CDD" id="cd17748">
    <property type="entry name" value="BRCT_DNA_ligase_like"/>
    <property type="match status" value="1"/>
</dbReference>
<dbReference type="CDD" id="cd00114">
    <property type="entry name" value="LIGANc"/>
    <property type="match status" value="1"/>
</dbReference>
<dbReference type="FunFam" id="1.10.150.20:FF:000007">
    <property type="entry name" value="DNA ligase"/>
    <property type="match status" value="1"/>
</dbReference>
<dbReference type="Gene3D" id="1.10.150.20">
    <property type="entry name" value="5' to 3' exonuclease, C-terminal subdomain"/>
    <property type="match status" value="2"/>
</dbReference>
<dbReference type="Gene3D" id="3.40.50.10190">
    <property type="entry name" value="BRCT domain"/>
    <property type="match status" value="1"/>
</dbReference>
<dbReference type="Gene3D" id="3.30.470.30">
    <property type="entry name" value="DNA ligase/mRNA capping enzyme"/>
    <property type="match status" value="1"/>
</dbReference>
<dbReference type="Gene3D" id="1.10.287.610">
    <property type="entry name" value="Helix hairpin bin"/>
    <property type="match status" value="1"/>
</dbReference>
<dbReference type="Gene3D" id="2.40.50.140">
    <property type="entry name" value="Nucleic acid-binding proteins"/>
    <property type="match status" value="1"/>
</dbReference>
<dbReference type="HAMAP" id="MF_01588">
    <property type="entry name" value="DNA_ligase_A"/>
    <property type="match status" value="1"/>
</dbReference>
<dbReference type="InterPro" id="IPR001357">
    <property type="entry name" value="BRCT_dom"/>
</dbReference>
<dbReference type="InterPro" id="IPR036420">
    <property type="entry name" value="BRCT_dom_sf"/>
</dbReference>
<dbReference type="InterPro" id="IPR041663">
    <property type="entry name" value="DisA/LigA_HHH"/>
</dbReference>
<dbReference type="InterPro" id="IPR001679">
    <property type="entry name" value="DNA_ligase"/>
</dbReference>
<dbReference type="InterPro" id="IPR018239">
    <property type="entry name" value="DNA_ligase_AS"/>
</dbReference>
<dbReference type="InterPro" id="IPR013839">
    <property type="entry name" value="DNAligase_adenylation"/>
</dbReference>
<dbReference type="InterPro" id="IPR013840">
    <property type="entry name" value="DNAligase_N"/>
</dbReference>
<dbReference type="InterPro" id="IPR012340">
    <property type="entry name" value="NA-bd_OB-fold"/>
</dbReference>
<dbReference type="InterPro" id="IPR004150">
    <property type="entry name" value="NAD_DNA_ligase_OB"/>
</dbReference>
<dbReference type="InterPro" id="IPR010994">
    <property type="entry name" value="RuvA_2-like"/>
</dbReference>
<dbReference type="NCBIfam" id="TIGR00575">
    <property type="entry name" value="dnlj"/>
    <property type="match status" value="1"/>
</dbReference>
<dbReference type="NCBIfam" id="NF005932">
    <property type="entry name" value="PRK07956.1"/>
    <property type="match status" value="1"/>
</dbReference>
<dbReference type="PANTHER" id="PTHR23389">
    <property type="entry name" value="CHROMOSOME TRANSMISSION FIDELITY FACTOR 18"/>
    <property type="match status" value="1"/>
</dbReference>
<dbReference type="PANTHER" id="PTHR23389:SF9">
    <property type="entry name" value="DNA LIGASE"/>
    <property type="match status" value="1"/>
</dbReference>
<dbReference type="Pfam" id="PF00533">
    <property type="entry name" value="BRCT"/>
    <property type="match status" value="1"/>
</dbReference>
<dbReference type="Pfam" id="PF01653">
    <property type="entry name" value="DNA_ligase_aden"/>
    <property type="match status" value="1"/>
</dbReference>
<dbReference type="Pfam" id="PF03120">
    <property type="entry name" value="DNA_ligase_OB"/>
    <property type="match status" value="1"/>
</dbReference>
<dbReference type="Pfam" id="PF12826">
    <property type="entry name" value="HHH_2"/>
    <property type="match status" value="1"/>
</dbReference>
<dbReference type="PIRSF" id="PIRSF001604">
    <property type="entry name" value="LigA"/>
    <property type="match status" value="1"/>
</dbReference>
<dbReference type="SMART" id="SM00292">
    <property type="entry name" value="BRCT"/>
    <property type="match status" value="1"/>
</dbReference>
<dbReference type="SMART" id="SM00532">
    <property type="entry name" value="LIGANc"/>
    <property type="match status" value="1"/>
</dbReference>
<dbReference type="SUPFAM" id="SSF52113">
    <property type="entry name" value="BRCT domain"/>
    <property type="match status" value="1"/>
</dbReference>
<dbReference type="SUPFAM" id="SSF56091">
    <property type="entry name" value="DNA ligase/mRNA capping enzyme, catalytic domain"/>
    <property type="match status" value="1"/>
</dbReference>
<dbReference type="SUPFAM" id="SSF50249">
    <property type="entry name" value="Nucleic acid-binding proteins"/>
    <property type="match status" value="1"/>
</dbReference>
<dbReference type="SUPFAM" id="SSF47781">
    <property type="entry name" value="RuvA domain 2-like"/>
    <property type="match status" value="1"/>
</dbReference>
<dbReference type="PROSITE" id="PS50172">
    <property type="entry name" value="BRCT"/>
    <property type="match status" value="1"/>
</dbReference>
<dbReference type="PROSITE" id="PS01055">
    <property type="entry name" value="DNA_LIGASE_N1"/>
    <property type="match status" value="1"/>
</dbReference>
<feature type="chain" id="PRO_0000313174" description="DNA ligase">
    <location>
        <begin position="1"/>
        <end position="645"/>
    </location>
</feature>
<feature type="domain" description="BRCT" evidence="1">
    <location>
        <begin position="570"/>
        <end position="645"/>
    </location>
</feature>
<feature type="active site" description="N6-AMP-lysine intermediate" evidence="1">
    <location>
        <position position="108"/>
    </location>
</feature>
<feature type="binding site" evidence="1">
    <location>
        <begin position="30"/>
        <end position="34"/>
    </location>
    <ligand>
        <name>NAD(+)</name>
        <dbReference type="ChEBI" id="CHEBI:57540"/>
    </ligand>
</feature>
<feature type="binding site" evidence="1">
    <location>
        <begin position="79"/>
        <end position="80"/>
    </location>
    <ligand>
        <name>NAD(+)</name>
        <dbReference type="ChEBI" id="CHEBI:57540"/>
    </ligand>
</feature>
<feature type="binding site" evidence="1">
    <location>
        <position position="106"/>
    </location>
    <ligand>
        <name>NAD(+)</name>
        <dbReference type="ChEBI" id="CHEBI:57540"/>
    </ligand>
</feature>
<feature type="binding site" evidence="1">
    <location>
        <position position="129"/>
    </location>
    <ligand>
        <name>NAD(+)</name>
        <dbReference type="ChEBI" id="CHEBI:57540"/>
    </ligand>
</feature>
<feature type="binding site" evidence="1">
    <location>
        <position position="163"/>
    </location>
    <ligand>
        <name>NAD(+)</name>
        <dbReference type="ChEBI" id="CHEBI:57540"/>
    </ligand>
</feature>
<feature type="binding site" evidence="1">
    <location>
        <position position="302"/>
    </location>
    <ligand>
        <name>NAD(+)</name>
        <dbReference type="ChEBI" id="CHEBI:57540"/>
    </ligand>
</feature>
<feature type="binding site" evidence="1">
    <location>
        <position position="396"/>
    </location>
    <ligand>
        <name>Zn(2+)</name>
        <dbReference type="ChEBI" id="CHEBI:29105"/>
    </ligand>
</feature>
<feature type="binding site" evidence="1">
    <location>
        <position position="399"/>
    </location>
    <ligand>
        <name>Zn(2+)</name>
        <dbReference type="ChEBI" id="CHEBI:29105"/>
    </ligand>
</feature>
<feature type="binding site" evidence="1">
    <location>
        <position position="412"/>
    </location>
    <ligand>
        <name>Zn(2+)</name>
        <dbReference type="ChEBI" id="CHEBI:29105"/>
    </ligand>
</feature>
<feature type="binding site" evidence="1">
    <location>
        <position position="417"/>
    </location>
    <ligand>
        <name>Zn(2+)</name>
        <dbReference type="ChEBI" id="CHEBI:29105"/>
    </ligand>
</feature>